<feature type="chain" id="PRO_0000353480" description="DNA-directed RNA polymerase subunit beta'">
    <location>
        <begin position="1"/>
        <end position="680"/>
    </location>
</feature>
<feature type="binding site" evidence="1">
    <location>
        <position position="69"/>
    </location>
    <ligand>
        <name>Zn(2+)</name>
        <dbReference type="ChEBI" id="CHEBI:29105"/>
    </ligand>
</feature>
<feature type="binding site" evidence="1">
    <location>
        <position position="71"/>
    </location>
    <ligand>
        <name>Zn(2+)</name>
        <dbReference type="ChEBI" id="CHEBI:29105"/>
    </ligand>
</feature>
<feature type="binding site" evidence="1">
    <location>
        <position position="87"/>
    </location>
    <ligand>
        <name>Zn(2+)</name>
        <dbReference type="ChEBI" id="CHEBI:29105"/>
    </ligand>
</feature>
<feature type="binding site" evidence="1">
    <location>
        <position position="90"/>
    </location>
    <ligand>
        <name>Zn(2+)</name>
        <dbReference type="ChEBI" id="CHEBI:29105"/>
    </ligand>
</feature>
<feature type="binding site" evidence="1">
    <location>
        <position position="489"/>
    </location>
    <ligand>
        <name>Mg(2+)</name>
        <dbReference type="ChEBI" id="CHEBI:18420"/>
    </ligand>
</feature>
<feature type="binding site" evidence="1">
    <location>
        <position position="491"/>
    </location>
    <ligand>
        <name>Mg(2+)</name>
        <dbReference type="ChEBI" id="CHEBI:18420"/>
    </ligand>
</feature>
<feature type="binding site" evidence="1">
    <location>
        <position position="493"/>
    </location>
    <ligand>
        <name>Mg(2+)</name>
        <dbReference type="ChEBI" id="CHEBI:18420"/>
    </ligand>
</feature>
<organism>
    <name type="scientific">Ceratophyllum demersum</name>
    <name type="common">Rigid hornwort</name>
    <name type="synonym">Coontail</name>
    <dbReference type="NCBI Taxonomy" id="4428"/>
    <lineage>
        <taxon>Eukaryota</taxon>
        <taxon>Viridiplantae</taxon>
        <taxon>Streptophyta</taxon>
        <taxon>Embryophyta</taxon>
        <taxon>Tracheophyta</taxon>
        <taxon>Spermatophyta</taxon>
        <taxon>Magnoliopsida</taxon>
        <taxon>Ceratophyllales</taxon>
        <taxon>Ceratophyllaceae</taxon>
        <taxon>Ceratophyllum</taxon>
    </lineage>
</organism>
<keyword id="KW-0150">Chloroplast</keyword>
<keyword id="KW-0240">DNA-directed RNA polymerase</keyword>
<keyword id="KW-0460">Magnesium</keyword>
<keyword id="KW-0479">Metal-binding</keyword>
<keyword id="KW-0548">Nucleotidyltransferase</keyword>
<keyword id="KW-0934">Plastid</keyword>
<keyword id="KW-0804">Transcription</keyword>
<keyword id="KW-0808">Transferase</keyword>
<keyword id="KW-0862">Zinc</keyword>
<gene>
    <name evidence="1" type="primary">rpoC1</name>
</gene>
<comment type="function">
    <text evidence="1">DNA-dependent RNA polymerase catalyzes the transcription of DNA into RNA using the four ribonucleoside triphosphates as substrates.</text>
</comment>
<comment type="catalytic activity">
    <reaction evidence="1">
        <text>RNA(n) + a ribonucleoside 5'-triphosphate = RNA(n+1) + diphosphate</text>
        <dbReference type="Rhea" id="RHEA:21248"/>
        <dbReference type="Rhea" id="RHEA-COMP:14527"/>
        <dbReference type="Rhea" id="RHEA-COMP:17342"/>
        <dbReference type="ChEBI" id="CHEBI:33019"/>
        <dbReference type="ChEBI" id="CHEBI:61557"/>
        <dbReference type="ChEBI" id="CHEBI:140395"/>
        <dbReference type="EC" id="2.7.7.6"/>
    </reaction>
</comment>
<comment type="cofactor">
    <cofactor evidence="1">
        <name>Mg(2+)</name>
        <dbReference type="ChEBI" id="CHEBI:18420"/>
    </cofactor>
    <text evidence="1">Binds 1 Mg(2+) ion per subunit.</text>
</comment>
<comment type="cofactor">
    <cofactor evidence="1">
        <name>Zn(2+)</name>
        <dbReference type="ChEBI" id="CHEBI:29105"/>
    </cofactor>
    <text evidence="1">Binds 1 Zn(2+) ion per subunit.</text>
</comment>
<comment type="subunit">
    <text evidence="1">In plastids the minimal PEP RNA polymerase catalytic core is composed of four subunits: alpha, beta, beta', and beta''. When a (nuclear-encoded) sigma factor is associated with the core the holoenzyme is formed, which can initiate transcription.</text>
</comment>
<comment type="subcellular location">
    <subcellularLocation>
        <location evidence="1">Plastid</location>
        <location evidence="1">Chloroplast</location>
    </subcellularLocation>
</comment>
<comment type="similarity">
    <text evidence="1">Belongs to the RNA polymerase beta' chain family. RpoC1 subfamily.</text>
</comment>
<geneLocation type="chloroplast"/>
<reference key="1">
    <citation type="journal article" date="2007" name="Proc. Natl. Acad. Sci. U.S.A.">
        <title>Using plastid genome-scale data to resolve enigmatic relationships among basal angiosperms.</title>
        <authorList>
            <person name="Moore M.J."/>
            <person name="Bell C.D."/>
            <person name="Soltis P.S."/>
            <person name="Soltis D.E."/>
        </authorList>
    </citation>
    <scope>NUCLEOTIDE SEQUENCE [LARGE SCALE GENOMIC DNA]</scope>
</reference>
<accession>A8SE82</accession>
<dbReference type="EC" id="2.7.7.6" evidence="1"/>
<dbReference type="EMBL" id="EF614270">
    <property type="protein sequence ID" value="ABQ81441.1"/>
    <property type="molecule type" value="Genomic_DNA"/>
</dbReference>
<dbReference type="RefSeq" id="YP_001542438.1">
    <property type="nucleotide sequence ID" value="NC_009962.1"/>
</dbReference>
<dbReference type="SMR" id="A8SE82"/>
<dbReference type="GeneID" id="5729462"/>
<dbReference type="GO" id="GO:0009507">
    <property type="term" value="C:chloroplast"/>
    <property type="evidence" value="ECO:0007669"/>
    <property type="project" value="UniProtKB-SubCell"/>
</dbReference>
<dbReference type="GO" id="GO:0000428">
    <property type="term" value="C:DNA-directed RNA polymerase complex"/>
    <property type="evidence" value="ECO:0007669"/>
    <property type="project" value="UniProtKB-KW"/>
</dbReference>
<dbReference type="GO" id="GO:0005739">
    <property type="term" value="C:mitochondrion"/>
    <property type="evidence" value="ECO:0007669"/>
    <property type="project" value="GOC"/>
</dbReference>
<dbReference type="GO" id="GO:0003677">
    <property type="term" value="F:DNA binding"/>
    <property type="evidence" value="ECO:0007669"/>
    <property type="project" value="UniProtKB-UniRule"/>
</dbReference>
<dbReference type="GO" id="GO:0003899">
    <property type="term" value="F:DNA-directed RNA polymerase activity"/>
    <property type="evidence" value="ECO:0007669"/>
    <property type="project" value="UniProtKB-UniRule"/>
</dbReference>
<dbReference type="GO" id="GO:0000287">
    <property type="term" value="F:magnesium ion binding"/>
    <property type="evidence" value="ECO:0007669"/>
    <property type="project" value="UniProtKB-UniRule"/>
</dbReference>
<dbReference type="GO" id="GO:0008270">
    <property type="term" value="F:zinc ion binding"/>
    <property type="evidence" value="ECO:0007669"/>
    <property type="project" value="UniProtKB-UniRule"/>
</dbReference>
<dbReference type="GO" id="GO:0006351">
    <property type="term" value="P:DNA-templated transcription"/>
    <property type="evidence" value="ECO:0007669"/>
    <property type="project" value="UniProtKB-UniRule"/>
</dbReference>
<dbReference type="FunFam" id="4.10.860.120:FF:000007">
    <property type="entry name" value="DNA-directed RNA polymerase subunit gamma"/>
    <property type="match status" value="1"/>
</dbReference>
<dbReference type="Gene3D" id="1.10.40.90">
    <property type="match status" value="1"/>
</dbReference>
<dbReference type="Gene3D" id="2.40.40.20">
    <property type="match status" value="1"/>
</dbReference>
<dbReference type="Gene3D" id="4.10.860.120">
    <property type="entry name" value="RNA polymerase II, clamp domain"/>
    <property type="match status" value="1"/>
</dbReference>
<dbReference type="Gene3D" id="1.10.274.100">
    <property type="entry name" value="RNA polymerase Rpb1, domain 3"/>
    <property type="match status" value="1"/>
</dbReference>
<dbReference type="HAMAP" id="MF_01323">
    <property type="entry name" value="RNApol_bact_RpoC1"/>
    <property type="match status" value="1"/>
</dbReference>
<dbReference type="InterPro" id="IPR045867">
    <property type="entry name" value="DNA-dir_RpoC_beta_prime"/>
</dbReference>
<dbReference type="InterPro" id="IPR000722">
    <property type="entry name" value="RNA_pol_asu"/>
</dbReference>
<dbReference type="InterPro" id="IPR006592">
    <property type="entry name" value="RNA_pol_N"/>
</dbReference>
<dbReference type="InterPro" id="IPR007080">
    <property type="entry name" value="RNA_pol_Rpb1_1"/>
</dbReference>
<dbReference type="InterPro" id="IPR042102">
    <property type="entry name" value="RNA_pol_Rpb1_3_sf"/>
</dbReference>
<dbReference type="InterPro" id="IPR044893">
    <property type="entry name" value="RNA_pol_Rpb1_clamp_domain"/>
</dbReference>
<dbReference type="InterPro" id="IPR034678">
    <property type="entry name" value="RNApol_RpoC1"/>
</dbReference>
<dbReference type="PANTHER" id="PTHR19376">
    <property type="entry name" value="DNA-DIRECTED RNA POLYMERASE"/>
    <property type="match status" value="1"/>
</dbReference>
<dbReference type="PANTHER" id="PTHR19376:SF54">
    <property type="entry name" value="DNA-DIRECTED RNA POLYMERASE SUBUNIT BETA"/>
    <property type="match status" value="1"/>
</dbReference>
<dbReference type="Pfam" id="PF04997">
    <property type="entry name" value="RNA_pol_Rpb1_1"/>
    <property type="match status" value="1"/>
</dbReference>
<dbReference type="Pfam" id="PF00623">
    <property type="entry name" value="RNA_pol_Rpb1_2"/>
    <property type="match status" value="2"/>
</dbReference>
<dbReference type="SMART" id="SM00663">
    <property type="entry name" value="RPOLA_N"/>
    <property type="match status" value="1"/>
</dbReference>
<dbReference type="SUPFAM" id="SSF64484">
    <property type="entry name" value="beta and beta-prime subunits of DNA dependent RNA-polymerase"/>
    <property type="match status" value="1"/>
</dbReference>
<sequence length="680" mass="78181">MIDRYKHQQLRIGSVSPQQIINWGKKILPNGEIVGEVTKPYTFHYKTNKPEKDGLFCERISGPIKSGICACGNYRVIGDKKEDPKFCEQCGVEFVDSRIRRYQMGYIKLACPVTHVWYLKRLPSYIANLLDKPLKELEGLVYCDFSFARPIAKKPTFLRLRGSFEYEIQSRKYSIPLFFTTQGFDTFRNREIATGAGAIREQLADLDLRIIIDHSLVEWKELGEEGSTGNEWEDRKIRRRKDFLVRRMELAKHFIRTNIEPERMVLCLLPVLPPELRPIIQIDGGKPMSSDINELYRRVIYRNNTLTDLLTTSRSTPGESVMCQEKLVQEAVDTLLDNGIRGQPMRDGHNKVYKSFSDVIEGKEGRFRETLLGKRVDYSGRSVIVVGPSLSLHRCGLPREIAIELFQTFVIRGLIRQQIASNIGIAKSKIREKEPIVWEILQEVMQGHPVLLNRAPTLHRLGIQAFQPILVEGRAICLHPLVRKGFNADFDGDQMAVHVPLSLEAQAEARLLMFSHMNLLSPAMGDPISVPTQDMLIGLYVLTIGNRRGICANRYNSCNRGKYQNETKNNSKYTKAKEPYFSSAYDALGAYRQKRINLDNPLWLRWRLDQRAIASREVPIEVQYESLGTYHEIYGQYLIVRSVKKEILCIYIRTTVGHISFYREIEEAIQGFCRAYSYGT</sequence>
<evidence type="ECO:0000255" key="1">
    <source>
        <dbReference type="HAMAP-Rule" id="MF_01323"/>
    </source>
</evidence>
<protein>
    <recommendedName>
        <fullName evidence="1">DNA-directed RNA polymerase subunit beta'</fullName>
        <ecNumber evidence="1">2.7.7.6</ecNumber>
    </recommendedName>
    <alternativeName>
        <fullName evidence="1">PEP</fullName>
    </alternativeName>
    <alternativeName>
        <fullName evidence="1">Plastid-encoded RNA polymerase subunit beta'</fullName>
        <shortName evidence="1">RNA polymerase subunit beta'</shortName>
    </alternativeName>
</protein>
<name>RPOC1_CERDE</name>
<proteinExistence type="inferred from homology"/>